<evidence type="ECO:0000250" key="1">
    <source>
        <dbReference type="UniProtKB" id="P46776"/>
    </source>
</evidence>
<evidence type="ECO:0000256" key="2">
    <source>
        <dbReference type="SAM" id="MobiDB-lite"/>
    </source>
</evidence>
<evidence type="ECO:0000305" key="3"/>
<dbReference type="EMBL" id="F14739">
    <property type="protein sequence ID" value="CAA23218.1"/>
    <property type="molecule type" value="mRNA"/>
</dbReference>
<dbReference type="STRING" id="9823.ENSSSCP00000046006"/>
<dbReference type="PaxDb" id="9823-ENSSSCP00000015499"/>
<dbReference type="PeptideAtlas" id="Q29333"/>
<dbReference type="eggNOG" id="KOG1742">
    <property type="taxonomic scope" value="Eukaryota"/>
</dbReference>
<dbReference type="InParanoid" id="Q29333"/>
<dbReference type="Proteomes" id="UP000008227">
    <property type="component" value="Unplaced"/>
</dbReference>
<dbReference type="Proteomes" id="UP000314985">
    <property type="component" value="Unplaced"/>
</dbReference>
<dbReference type="Proteomes" id="UP000694570">
    <property type="component" value="Unplaced"/>
</dbReference>
<dbReference type="Proteomes" id="UP000694571">
    <property type="component" value="Unplaced"/>
</dbReference>
<dbReference type="Proteomes" id="UP000694720">
    <property type="component" value="Unplaced"/>
</dbReference>
<dbReference type="Proteomes" id="UP000694722">
    <property type="component" value="Unplaced"/>
</dbReference>
<dbReference type="Proteomes" id="UP000694723">
    <property type="component" value="Unplaced"/>
</dbReference>
<dbReference type="Proteomes" id="UP000694724">
    <property type="component" value="Unplaced"/>
</dbReference>
<dbReference type="Proteomes" id="UP000694725">
    <property type="component" value="Unplaced"/>
</dbReference>
<dbReference type="Proteomes" id="UP000694726">
    <property type="component" value="Unplaced"/>
</dbReference>
<dbReference type="Proteomes" id="UP000694727">
    <property type="component" value="Unplaced"/>
</dbReference>
<dbReference type="Proteomes" id="UP000694728">
    <property type="component" value="Unplaced"/>
</dbReference>
<dbReference type="GO" id="GO:0005737">
    <property type="term" value="C:cytoplasm"/>
    <property type="evidence" value="ECO:0007669"/>
    <property type="project" value="UniProtKB-SubCell"/>
</dbReference>
<dbReference type="GO" id="GO:1990904">
    <property type="term" value="C:ribonucleoprotein complex"/>
    <property type="evidence" value="ECO:0007669"/>
    <property type="project" value="UniProtKB-KW"/>
</dbReference>
<dbReference type="GO" id="GO:0005840">
    <property type="term" value="C:ribosome"/>
    <property type="evidence" value="ECO:0007669"/>
    <property type="project" value="UniProtKB-KW"/>
</dbReference>
<dbReference type="InterPro" id="IPR036227">
    <property type="entry name" value="Ribosomal_uL15/eL18_sf"/>
</dbReference>
<dbReference type="PANTHER" id="PTHR11721">
    <property type="entry name" value="60S RIBOSOMAL PROTEIN L27A"/>
    <property type="match status" value="1"/>
</dbReference>
<dbReference type="PANTHER" id="PTHR11721:SF3">
    <property type="entry name" value="LARGE RIBOSOMAL SUBUNIT PROTEIN UL15"/>
    <property type="match status" value="1"/>
</dbReference>
<dbReference type="SUPFAM" id="SSF52080">
    <property type="entry name" value="Ribosomal proteins L15p and L18e"/>
    <property type="match status" value="1"/>
</dbReference>
<organism>
    <name type="scientific">Sus scrofa</name>
    <name type="common">Pig</name>
    <dbReference type="NCBI Taxonomy" id="9823"/>
    <lineage>
        <taxon>Eukaryota</taxon>
        <taxon>Metazoa</taxon>
        <taxon>Chordata</taxon>
        <taxon>Craniata</taxon>
        <taxon>Vertebrata</taxon>
        <taxon>Euteleostomi</taxon>
        <taxon>Mammalia</taxon>
        <taxon>Eutheria</taxon>
        <taxon>Laurasiatheria</taxon>
        <taxon>Artiodactyla</taxon>
        <taxon>Suina</taxon>
        <taxon>Suidae</taxon>
        <taxon>Sus</taxon>
    </lineage>
</organism>
<proteinExistence type="evidence at transcript level"/>
<feature type="chain" id="PRO_0000104882" description="Large ribosomal subunit protein uL15">
    <location>
        <begin position="1"/>
        <end position="54" status="greater than"/>
    </location>
</feature>
<feature type="region of interest" description="Disordered" evidence="2">
    <location>
        <begin position="1"/>
        <end position="42"/>
    </location>
</feature>
<feature type="compositionally biased region" description="Basic residues" evidence="2">
    <location>
        <begin position="1"/>
        <end position="30"/>
    </location>
</feature>
<feature type="modified residue" description="(3S)-3-hydroxyhistidine" evidence="1">
    <location>
        <position position="39"/>
    </location>
</feature>
<feature type="modified residue" description="N6-acetyllysine" evidence="1">
    <location>
        <position position="47"/>
    </location>
</feature>
<feature type="non-terminal residue">
    <location>
        <position position="54"/>
    </location>
</feature>
<accession>Q29333</accession>
<reference key="1">
    <citation type="journal article" date="1996" name="Mamm. Genome">
        <title>Evaluation and characterization of a porcine small intestine cDNA library: analysis of 839 clones.</title>
        <authorList>
            <person name="Winteroe A.K."/>
            <person name="Fredholm M."/>
            <person name="Davies W."/>
        </authorList>
    </citation>
    <scope>NUCLEOTIDE SEQUENCE [LARGE SCALE MRNA]</scope>
    <source>
        <tissue>Small intestine</tissue>
    </source>
</reference>
<protein>
    <recommendedName>
        <fullName evidence="3">Large ribosomal subunit protein uL15</fullName>
    </recommendedName>
    <alternativeName>
        <fullName>60S ribosomal protein L27a</fullName>
    </alternativeName>
</protein>
<gene>
    <name type="primary">RPL27A</name>
</gene>
<comment type="function">
    <text evidence="1">Component of the large ribosomal subunit. The ribosome is a large ribonucleoprotein complex responsible for the synthesis of proteins in the cell.</text>
</comment>
<comment type="subunit">
    <text evidence="1">Component of the large ribosomal subunit.</text>
</comment>
<comment type="subcellular location">
    <subcellularLocation>
        <location evidence="1">Cytoplasm</location>
    </subcellularLocation>
</comment>
<comment type="PTM">
    <text evidence="1">Hydroxylated on His-39 by MINA.</text>
</comment>
<comment type="similarity">
    <text evidence="3">Belongs to the universal ribosomal protein uL15 family.</text>
</comment>
<keyword id="KW-0007">Acetylation</keyword>
<keyword id="KW-0963">Cytoplasm</keyword>
<keyword id="KW-0379">Hydroxylation</keyword>
<keyword id="KW-1185">Reference proteome</keyword>
<keyword id="KW-0687">Ribonucleoprotein</keyword>
<keyword id="KW-0689">Ribosomal protein</keyword>
<sequence length="54" mass="6183">MPSRLRXTRKLRGHVSHGHGRIGKHRKHPGGRGNAGGMHHHRINFDKYHXGYFG</sequence>
<name>RL27A_PIG</name>